<sequence>MKRKLSWMCAAVIGLSAFPAFMTAAAPAMPPLINAEPTEPAQSPVTEAPVVAQTAPSREVKLTFAQIAPPPGSMALRGVNPNGGIEFGMRSDEVASKAVLNLEYTPSPSLLPVQSQLKVYLNDELMGVLPVTKEQLGKKTLAQVPINPLFITDFNRVRLEFVGHYRDVCENPASSTLWLDIGRNSALDLTYNMLAVNNDLSHFPVPFFDPRDNRPVTLPIVFADMPDLAQQQAASIVASWFGSRAGWRGQRFPVLYNHLPDRNAIVFATNDRRPDFLRDHPAVNAPVIEMMNHPDNPYVKLLVVFGRDDKDLLQAAKGIAQGNILFRGSSVVVNDVKPLLARKPYDAPNWVRTDRPVTFGELKTYEEQLQSSGLEPAPINVSLNLPPDLYLLRSNGIDMDLNYRYTSPPTKDSSRLDISLNNQFLQAFSLNSTQETNRLLLRLPVLQGLLDGKTDVSIPALKLGAMNQLRFDFRYMNPMPGGSVDNCITFQPVPNHVVIGDDSTIDFSKYYHFIAMPDLRAFANAGFPFSRMADLSDTLAVMPKTPTEAQMETLLNTVGAIGGQTGFPAINLTITDDSAQIADKDADLLIIGAIPGKLKDDKRIDLLVQATQSWVKTPMRQTAFPSIMPDEADRAADAQSTVTASGPMAAVVGFQSPFNDQRSVIALLADSPRGYQLLNDAVNDSGKRAAMFGSVAVIRESGVHSLRVGDIYYVGHLPWFERLWYALANHPVLLAVLAALSVVLLAWVLWRLLRILSRRRLDPDHE</sequence>
<proteinExistence type="inferred from homology"/>
<keyword id="KW-0973">c-di-GMP</keyword>
<keyword id="KW-0997">Cell inner membrane</keyword>
<keyword id="KW-1003">Cell membrane</keyword>
<keyword id="KW-0135">Cellulose biosynthesis</keyword>
<keyword id="KW-0472">Membrane</keyword>
<keyword id="KW-0732">Signal</keyword>
<keyword id="KW-0812">Transmembrane</keyword>
<keyword id="KW-1133">Transmembrane helix</keyword>
<name>BCSB_SALTI</name>
<reference key="1">
    <citation type="journal article" date="2001" name="Nature">
        <title>Complete genome sequence of a multiple drug resistant Salmonella enterica serovar Typhi CT18.</title>
        <authorList>
            <person name="Parkhill J."/>
            <person name="Dougan G."/>
            <person name="James K.D."/>
            <person name="Thomson N.R."/>
            <person name="Pickard D."/>
            <person name="Wain J."/>
            <person name="Churcher C.M."/>
            <person name="Mungall K.L."/>
            <person name="Bentley S.D."/>
            <person name="Holden M.T.G."/>
            <person name="Sebaihia M."/>
            <person name="Baker S."/>
            <person name="Basham D."/>
            <person name="Brooks K."/>
            <person name="Chillingworth T."/>
            <person name="Connerton P."/>
            <person name="Cronin A."/>
            <person name="Davis P."/>
            <person name="Davies R.M."/>
            <person name="Dowd L."/>
            <person name="White N."/>
            <person name="Farrar J."/>
            <person name="Feltwell T."/>
            <person name="Hamlin N."/>
            <person name="Haque A."/>
            <person name="Hien T.T."/>
            <person name="Holroyd S."/>
            <person name="Jagels K."/>
            <person name="Krogh A."/>
            <person name="Larsen T.S."/>
            <person name="Leather S."/>
            <person name="Moule S."/>
            <person name="O'Gaora P."/>
            <person name="Parry C."/>
            <person name="Quail M.A."/>
            <person name="Rutherford K.M."/>
            <person name="Simmonds M."/>
            <person name="Skelton J."/>
            <person name="Stevens K."/>
            <person name="Whitehead S."/>
            <person name="Barrell B.G."/>
        </authorList>
    </citation>
    <scope>NUCLEOTIDE SEQUENCE [LARGE SCALE GENOMIC DNA]</scope>
    <source>
        <strain>CT18</strain>
    </source>
</reference>
<reference key="2">
    <citation type="journal article" date="2003" name="J. Bacteriol.">
        <title>Comparative genomics of Salmonella enterica serovar Typhi strains Ty2 and CT18.</title>
        <authorList>
            <person name="Deng W."/>
            <person name="Liou S.-R."/>
            <person name="Plunkett G. III"/>
            <person name="Mayhew G.F."/>
            <person name="Rose D.J."/>
            <person name="Burland V."/>
            <person name="Kodoyianni V."/>
            <person name="Schwartz D.C."/>
            <person name="Blattner F.R."/>
        </authorList>
    </citation>
    <scope>NUCLEOTIDE SEQUENCE [LARGE SCALE GENOMIC DNA]</scope>
    <source>
        <strain>ATCC 700931 / Ty2</strain>
    </source>
</reference>
<evidence type="ECO:0000250" key="1"/>
<evidence type="ECO:0000255" key="2"/>
<evidence type="ECO:0000305" key="3"/>
<dbReference type="EMBL" id="AL513382">
    <property type="protein sequence ID" value="CAD08007.1"/>
    <property type="molecule type" value="Genomic_DNA"/>
</dbReference>
<dbReference type="EMBL" id="AE014613">
    <property type="protein sequence ID" value="AAO71374.1"/>
    <property type="molecule type" value="Genomic_DNA"/>
</dbReference>
<dbReference type="RefSeq" id="NP_458302.1">
    <property type="nucleotide sequence ID" value="NC_003198.1"/>
</dbReference>
<dbReference type="RefSeq" id="WP_000823808.1">
    <property type="nucleotide sequence ID" value="NZ_WSUR01000001.1"/>
</dbReference>
<dbReference type="SMR" id="Q8Z290"/>
<dbReference type="STRING" id="220341.gene:17588020"/>
<dbReference type="KEGG" id="stt:t3899"/>
<dbReference type="KEGG" id="sty:STY4182"/>
<dbReference type="PATRIC" id="fig|220341.7.peg.4271"/>
<dbReference type="eggNOG" id="COG1215">
    <property type="taxonomic scope" value="Bacteria"/>
</dbReference>
<dbReference type="HOGENOM" id="CLU_003556_1_1_6"/>
<dbReference type="OMA" id="FQYMNPM"/>
<dbReference type="OrthoDB" id="9806702at2"/>
<dbReference type="UniPathway" id="UPA00694"/>
<dbReference type="Proteomes" id="UP000000541">
    <property type="component" value="Chromosome"/>
</dbReference>
<dbReference type="Proteomes" id="UP000002670">
    <property type="component" value="Chromosome"/>
</dbReference>
<dbReference type="GO" id="GO:0005886">
    <property type="term" value="C:plasma membrane"/>
    <property type="evidence" value="ECO:0007669"/>
    <property type="project" value="UniProtKB-SubCell"/>
</dbReference>
<dbReference type="GO" id="GO:0030244">
    <property type="term" value="P:cellulose biosynthetic process"/>
    <property type="evidence" value="ECO:0007669"/>
    <property type="project" value="UniProtKB-KW"/>
</dbReference>
<dbReference type="GO" id="GO:0006011">
    <property type="term" value="P:UDP-alpha-D-glucose metabolic process"/>
    <property type="evidence" value="ECO:0007669"/>
    <property type="project" value="InterPro"/>
</dbReference>
<dbReference type="FunFam" id="2.60.120.260:FF:000094">
    <property type="entry name" value="Cyclic di-GMP-binding protein"/>
    <property type="match status" value="1"/>
</dbReference>
<dbReference type="Gene3D" id="2.60.120.260">
    <property type="entry name" value="Galactose-binding domain-like"/>
    <property type="match status" value="2"/>
</dbReference>
<dbReference type="InterPro" id="IPR003920">
    <property type="entry name" value="Cell_synth_B"/>
</dbReference>
<dbReference type="InterPro" id="IPR018513">
    <property type="entry name" value="Cell_synthase_bac"/>
</dbReference>
<dbReference type="NCBIfam" id="NF008323">
    <property type="entry name" value="PRK11114.1-1"/>
    <property type="match status" value="1"/>
</dbReference>
<dbReference type="NCBIfam" id="NF008325">
    <property type="entry name" value="PRK11114.1-3"/>
    <property type="match status" value="1"/>
</dbReference>
<dbReference type="PANTHER" id="PTHR39083">
    <property type="entry name" value="CYCLIC DI-GMP-BINDING PROTEIN"/>
    <property type="match status" value="1"/>
</dbReference>
<dbReference type="PANTHER" id="PTHR39083:SF1">
    <property type="entry name" value="CYCLIC DI-GMP-BINDING PROTEIN"/>
    <property type="match status" value="1"/>
</dbReference>
<dbReference type="Pfam" id="PF03170">
    <property type="entry name" value="BcsB"/>
    <property type="match status" value="1"/>
</dbReference>
<dbReference type="PRINTS" id="PR01440">
    <property type="entry name" value="CELLSNTHASEB"/>
</dbReference>
<feature type="signal peptide" evidence="2">
    <location>
        <begin position="1"/>
        <end position="35"/>
    </location>
</feature>
<feature type="chain" id="PRO_0000000270" description="Cyclic di-GMP-binding protein">
    <location>
        <begin position="36"/>
        <end position="766"/>
    </location>
</feature>
<feature type="topological domain" description="Periplasmic" evidence="2">
    <location>
        <begin position="36"/>
        <end position="729"/>
    </location>
</feature>
<feature type="transmembrane region" description="Helical" evidence="2">
    <location>
        <begin position="730"/>
        <end position="750"/>
    </location>
</feature>
<feature type="topological domain" description="Cytoplasmic" evidence="2">
    <location>
        <begin position="751"/>
        <end position="766"/>
    </location>
</feature>
<comment type="function">
    <text evidence="1">Binds the cellulose synthase activator, bis-(3'-5') cyclic diguanylic acid (c-di-GMP).</text>
</comment>
<comment type="pathway">
    <text>Glycan metabolism; bacterial cellulose biosynthesis.</text>
</comment>
<comment type="subunit">
    <text evidence="1">Tightly associated with the cellulose synthase catalytic subunit.</text>
</comment>
<comment type="subcellular location">
    <subcellularLocation>
        <location evidence="1">Cell inner membrane</location>
        <topology evidence="1">Single-pass type I membrane protein</topology>
    </subcellularLocation>
</comment>
<comment type="similarity">
    <text evidence="3">Belongs to the AcsB/BcsB family.</text>
</comment>
<organism>
    <name type="scientific">Salmonella typhi</name>
    <dbReference type="NCBI Taxonomy" id="90370"/>
    <lineage>
        <taxon>Bacteria</taxon>
        <taxon>Pseudomonadati</taxon>
        <taxon>Pseudomonadota</taxon>
        <taxon>Gammaproteobacteria</taxon>
        <taxon>Enterobacterales</taxon>
        <taxon>Enterobacteriaceae</taxon>
        <taxon>Salmonella</taxon>
    </lineage>
</organism>
<protein>
    <recommendedName>
        <fullName>Cyclic di-GMP-binding protein</fullName>
    </recommendedName>
    <alternativeName>
        <fullName>Cellulose synthase regulatory subunit</fullName>
    </alternativeName>
</protein>
<gene>
    <name type="primary">bcsB</name>
    <name type="ordered locus">STY4182</name>
    <name type="ordered locus">t3899</name>
</gene>
<accession>Q8Z290</accession>